<proteinExistence type="inferred from homology"/>
<feature type="chain" id="PRO_1000130842" description="UDP-N-acetylmuramoylalanine--D-glutamate ligase">
    <location>
        <begin position="1"/>
        <end position="416"/>
    </location>
</feature>
<feature type="binding site" evidence="1">
    <location>
        <begin position="108"/>
        <end position="114"/>
    </location>
    <ligand>
        <name>ATP</name>
        <dbReference type="ChEBI" id="CHEBI:30616"/>
    </ligand>
</feature>
<dbReference type="EC" id="6.3.2.9" evidence="1"/>
<dbReference type="EMBL" id="AM884177">
    <property type="protein sequence ID" value="CAP06525.1"/>
    <property type="molecule type" value="Genomic_DNA"/>
</dbReference>
<dbReference type="RefSeq" id="WP_012263554.1">
    <property type="nucleotide sequence ID" value="NC_010280.2"/>
</dbReference>
<dbReference type="SMR" id="B0BAL3"/>
<dbReference type="KEGG" id="ctl:CTLon_0127"/>
<dbReference type="HOGENOM" id="CLU_032540_0_0_0"/>
<dbReference type="UniPathway" id="UPA00219"/>
<dbReference type="Proteomes" id="UP001154401">
    <property type="component" value="Chromosome"/>
</dbReference>
<dbReference type="GO" id="GO:0005737">
    <property type="term" value="C:cytoplasm"/>
    <property type="evidence" value="ECO:0007669"/>
    <property type="project" value="UniProtKB-SubCell"/>
</dbReference>
<dbReference type="GO" id="GO:0005524">
    <property type="term" value="F:ATP binding"/>
    <property type="evidence" value="ECO:0007669"/>
    <property type="project" value="UniProtKB-UniRule"/>
</dbReference>
<dbReference type="GO" id="GO:0008764">
    <property type="term" value="F:UDP-N-acetylmuramoylalanine-D-glutamate ligase activity"/>
    <property type="evidence" value="ECO:0007669"/>
    <property type="project" value="UniProtKB-UniRule"/>
</dbReference>
<dbReference type="GO" id="GO:0051301">
    <property type="term" value="P:cell division"/>
    <property type="evidence" value="ECO:0007669"/>
    <property type="project" value="UniProtKB-KW"/>
</dbReference>
<dbReference type="GO" id="GO:0071555">
    <property type="term" value="P:cell wall organization"/>
    <property type="evidence" value="ECO:0007669"/>
    <property type="project" value="UniProtKB-KW"/>
</dbReference>
<dbReference type="GO" id="GO:0009252">
    <property type="term" value="P:peptidoglycan biosynthetic process"/>
    <property type="evidence" value="ECO:0007669"/>
    <property type="project" value="UniProtKB-UniRule"/>
</dbReference>
<dbReference type="GO" id="GO:0008360">
    <property type="term" value="P:regulation of cell shape"/>
    <property type="evidence" value="ECO:0007669"/>
    <property type="project" value="UniProtKB-KW"/>
</dbReference>
<dbReference type="Gene3D" id="3.90.190.20">
    <property type="entry name" value="Mur ligase, C-terminal domain"/>
    <property type="match status" value="1"/>
</dbReference>
<dbReference type="Gene3D" id="3.40.1190.10">
    <property type="entry name" value="Mur-like, catalytic domain"/>
    <property type="match status" value="1"/>
</dbReference>
<dbReference type="Gene3D" id="3.40.50.720">
    <property type="entry name" value="NAD(P)-binding Rossmann-like Domain"/>
    <property type="match status" value="1"/>
</dbReference>
<dbReference type="HAMAP" id="MF_00639">
    <property type="entry name" value="MurD"/>
    <property type="match status" value="1"/>
</dbReference>
<dbReference type="InterPro" id="IPR036565">
    <property type="entry name" value="Mur-like_cat_sf"/>
</dbReference>
<dbReference type="InterPro" id="IPR004101">
    <property type="entry name" value="Mur_ligase_C"/>
</dbReference>
<dbReference type="InterPro" id="IPR036615">
    <property type="entry name" value="Mur_ligase_C_dom_sf"/>
</dbReference>
<dbReference type="InterPro" id="IPR013221">
    <property type="entry name" value="Mur_ligase_cen"/>
</dbReference>
<dbReference type="InterPro" id="IPR005762">
    <property type="entry name" value="MurD"/>
</dbReference>
<dbReference type="NCBIfam" id="TIGR01087">
    <property type="entry name" value="murD"/>
    <property type="match status" value="1"/>
</dbReference>
<dbReference type="PANTHER" id="PTHR43692">
    <property type="entry name" value="UDP-N-ACETYLMURAMOYLALANINE--D-GLUTAMATE LIGASE"/>
    <property type="match status" value="1"/>
</dbReference>
<dbReference type="PANTHER" id="PTHR43692:SF1">
    <property type="entry name" value="UDP-N-ACETYLMURAMOYLALANINE--D-GLUTAMATE LIGASE"/>
    <property type="match status" value="1"/>
</dbReference>
<dbReference type="Pfam" id="PF02875">
    <property type="entry name" value="Mur_ligase_C"/>
    <property type="match status" value="1"/>
</dbReference>
<dbReference type="Pfam" id="PF08245">
    <property type="entry name" value="Mur_ligase_M"/>
    <property type="match status" value="1"/>
</dbReference>
<dbReference type="Pfam" id="PF21799">
    <property type="entry name" value="MurD-like_N"/>
    <property type="match status" value="1"/>
</dbReference>
<dbReference type="SUPFAM" id="SSF51984">
    <property type="entry name" value="MurCD N-terminal domain"/>
    <property type="match status" value="1"/>
</dbReference>
<dbReference type="SUPFAM" id="SSF53623">
    <property type="entry name" value="MurD-like peptide ligases, catalytic domain"/>
    <property type="match status" value="1"/>
</dbReference>
<dbReference type="SUPFAM" id="SSF53244">
    <property type="entry name" value="MurD-like peptide ligases, peptide-binding domain"/>
    <property type="match status" value="1"/>
</dbReference>
<organism>
    <name type="scientific">Chlamydia trachomatis serovar L2b (strain UCH-1/proctitis)</name>
    <dbReference type="NCBI Taxonomy" id="471473"/>
    <lineage>
        <taxon>Bacteria</taxon>
        <taxon>Pseudomonadati</taxon>
        <taxon>Chlamydiota</taxon>
        <taxon>Chlamydiia</taxon>
        <taxon>Chlamydiales</taxon>
        <taxon>Chlamydiaceae</taxon>
        <taxon>Chlamydia/Chlamydophila group</taxon>
        <taxon>Chlamydia</taxon>
    </lineage>
</organism>
<name>MURD_CHLTB</name>
<accession>B0BAL3</accession>
<gene>
    <name evidence="1" type="primary">murD</name>
    <name type="ordered locus">CTLon_0127</name>
</gene>
<evidence type="ECO:0000255" key="1">
    <source>
        <dbReference type="HAMAP-Rule" id="MF_00639"/>
    </source>
</evidence>
<keyword id="KW-0067">ATP-binding</keyword>
<keyword id="KW-0131">Cell cycle</keyword>
<keyword id="KW-0132">Cell division</keyword>
<keyword id="KW-0133">Cell shape</keyword>
<keyword id="KW-0961">Cell wall biogenesis/degradation</keyword>
<keyword id="KW-0963">Cytoplasm</keyword>
<keyword id="KW-0436">Ligase</keyword>
<keyword id="KW-0547">Nucleotide-binding</keyword>
<keyword id="KW-0573">Peptidoglycan synthesis</keyword>
<reference key="1">
    <citation type="journal article" date="2008" name="Genome Res.">
        <title>Chlamydia trachomatis: genome sequence analysis of lymphogranuloma venereum isolates.</title>
        <authorList>
            <person name="Thomson N.R."/>
            <person name="Holden M.T.G."/>
            <person name="Carder C."/>
            <person name="Lennard N."/>
            <person name="Lockey S.J."/>
            <person name="Marsh P."/>
            <person name="Skipp P."/>
            <person name="O'Connor C.D."/>
            <person name="Goodhead I."/>
            <person name="Norbertzcak H."/>
            <person name="Harris B."/>
            <person name="Ormond D."/>
            <person name="Rance R."/>
            <person name="Quail M.A."/>
            <person name="Parkhill J."/>
            <person name="Stephens R.S."/>
            <person name="Clarke I.N."/>
        </authorList>
    </citation>
    <scope>NUCLEOTIDE SEQUENCE [LARGE SCALE GENOMIC DNA]</scope>
    <source>
        <strain>UCH-1/proctitis</strain>
    </source>
</reference>
<sequence>MGLERVVVIGLGVSGRSIARFLAQKGVCVLGVDKSLHALQNCPYIQEKYLENEEFPSQVDYVVRSPGVSKEHPWVQAAIASHIPVMTDIQLAFQTEKFTERESLAITGTTGKTTTILFLEYLFKRSGIPAFAMGNVGIPILDGMQNPGVRIVEISSFQLADQEKSYPVLSGGMILNISDNHLDYHGNFSEYFQAKQNLALCMRNPDDLWVGDERFYGHLYLEEVQKYMRLLDKESALKPLYLHDKHNYCCAYLLAKIEFPISETSFIEAVATFNKPPHRMEYLGQKQGIHYINDSKATTVSATETALLGVGNQAIVILGGRNKGCTFSSLLPALRKAAKSVVAMGECAQEIARDLEEFPVTVVKNLSEALLCAEEQAVPGDVIVLSPACASFDQFRSYEERGAMFKHLVGMEEVLL</sequence>
<protein>
    <recommendedName>
        <fullName evidence="1">UDP-N-acetylmuramoylalanine--D-glutamate ligase</fullName>
        <ecNumber evidence="1">6.3.2.9</ecNumber>
    </recommendedName>
    <alternativeName>
        <fullName evidence="1">D-glutamic acid-adding enzyme</fullName>
    </alternativeName>
    <alternativeName>
        <fullName evidence="1">UDP-N-acetylmuramoyl-L-alanyl-D-glutamate synthetase</fullName>
    </alternativeName>
</protein>
<comment type="function">
    <text evidence="1">Cell wall formation. Catalyzes the addition of glutamate to the nucleotide precursor UDP-N-acetylmuramoyl-L-alanine (UMA).</text>
</comment>
<comment type="catalytic activity">
    <reaction evidence="1">
        <text>UDP-N-acetyl-alpha-D-muramoyl-L-alanine + D-glutamate + ATP = UDP-N-acetyl-alpha-D-muramoyl-L-alanyl-D-glutamate + ADP + phosphate + H(+)</text>
        <dbReference type="Rhea" id="RHEA:16429"/>
        <dbReference type="ChEBI" id="CHEBI:15378"/>
        <dbReference type="ChEBI" id="CHEBI:29986"/>
        <dbReference type="ChEBI" id="CHEBI:30616"/>
        <dbReference type="ChEBI" id="CHEBI:43474"/>
        <dbReference type="ChEBI" id="CHEBI:83898"/>
        <dbReference type="ChEBI" id="CHEBI:83900"/>
        <dbReference type="ChEBI" id="CHEBI:456216"/>
        <dbReference type="EC" id="6.3.2.9"/>
    </reaction>
</comment>
<comment type="pathway">
    <text evidence="1">Cell wall biogenesis; peptidoglycan biosynthesis.</text>
</comment>
<comment type="subcellular location">
    <subcellularLocation>
        <location evidence="1">Cytoplasm</location>
    </subcellularLocation>
</comment>
<comment type="similarity">
    <text evidence="1">Belongs to the MurCDEF family.</text>
</comment>